<dbReference type="EMBL" id="CP000439">
    <property type="protein sequence ID" value="ABK89146.1"/>
    <property type="molecule type" value="Genomic_DNA"/>
</dbReference>
<dbReference type="RefSeq" id="WP_003043247.1">
    <property type="nucleotide sequence ID" value="NZ_CP009633.1"/>
</dbReference>
<dbReference type="SMR" id="A0Q4I1"/>
<dbReference type="GeneID" id="75264263"/>
<dbReference type="KEGG" id="ftn:FTN_0237"/>
<dbReference type="KEGG" id="ftx:AW25_1805"/>
<dbReference type="BioCyc" id="FTUL401614:G1G75-248-MONOMER"/>
<dbReference type="Proteomes" id="UP000000762">
    <property type="component" value="Chromosome"/>
</dbReference>
<dbReference type="GO" id="GO:0005737">
    <property type="term" value="C:cytoplasm"/>
    <property type="evidence" value="ECO:0007669"/>
    <property type="project" value="UniProtKB-SubCell"/>
</dbReference>
<dbReference type="GO" id="GO:0005525">
    <property type="term" value="F:GTP binding"/>
    <property type="evidence" value="ECO:0007669"/>
    <property type="project" value="UniProtKB-UniRule"/>
</dbReference>
<dbReference type="GO" id="GO:0003924">
    <property type="term" value="F:GTPase activity"/>
    <property type="evidence" value="ECO:0007669"/>
    <property type="project" value="InterPro"/>
</dbReference>
<dbReference type="GO" id="GO:0097216">
    <property type="term" value="F:guanosine tetraphosphate binding"/>
    <property type="evidence" value="ECO:0007669"/>
    <property type="project" value="UniProtKB-ARBA"/>
</dbReference>
<dbReference type="GO" id="GO:0003746">
    <property type="term" value="F:translation elongation factor activity"/>
    <property type="evidence" value="ECO:0007669"/>
    <property type="project" value="UniProtKB-UniRule"/>
</dbReference>
<dbReference type="GO" id="GO:0032790">
    <property type="term" value="P:ribosome disassembly"/>
    <property type="evidence" value="ECO:0007669"/>
    <property type="project" value="TreeGrafter"/>
</dbReference>
<dbReference type="CDD" id="cd01886">
    <property type="entry name" value="EF-G"/>
    <property type="match status" value="1"/>
</dbReference>
<dbReference type="CDD" id="cd16262">
    <property type="entry name" value="EFG_III"/>
    <property type="match status" value="1"/>
</dbReference>
<dbReference type="CDD" id="cd01434">
    <property type="entry name" value="EFG_mtEFG1_IV"/>
    <property type="match status" value="1"/>
</dbReference>
<dbReference type="CDD" id="cd03713">
    <property type="entry name" value="EFG_mtEFG_C"/>
    <property type="match status" value="1"/>
</dbReference>
<dbReference type="CDD" id="cd04088">
    <property type="entry name" value="EFG_mtEFG_II"/>
    <property type="match status" value="1"/>
</dbReference>
<dbReference type="FunFam" id="2.40.30.10:FF:000006">
    <property type="entry name" value="Elongation factor G"/>
    <property type="match status" value="1"/>
</dbReference>
<dbReference type="FunFam" id="3.30.230.10:FF:000003">
    <property type="entry name" value="Elongation factor G"/>
    <property type="match status" value="1"/>
</dbReference>
<dbReference type="FunFam" id="3.30.70.240:FF:000001">
    <property type="entry name" value="Elongation factor G"/>
    <property type="match status" value="1"/>
</dbReference>
<dbReference type="FunFam" id="3.30.70.870:FF:000001">
    <property type="entry name" value="Elongation factor G"/>
    <property type="match status" value="1"/>
</dbReference>
<dbReference type="FunFam" id="3.40.50.300:FF:000029">
    <property type="entry name" value="Elongation factor G"/>
    <property type="match status" value="1"/>
</dbReference>
<dbReference type="Gene3D" id="3.30.230.10">
    <property type="match status" value="1"/>
</dbReference>
<dbReference type="Gene3D" id="3.30.70.240">
    <property type="match status" value="1"/>
</dbReference>
<dbReference type="Gene3D" id="3.30.70.870">
    <property type="entry name" value="Elongation Factor G (Translational Gtpase), domain 3"/>
    <property type="match status" value="1"/>
</dbReference>
<dbReference type="Gene3D" id="3.40.50.300">
    <property type="entry name" value="P-loop containing nucleotide triphosphate hydrolases"/>
    <property type="match status" value="1"/>
</dbReference>
<dbReference type="Gene3D" id="2.40.30.10">
    <property type="entry name" value="Translation factors"/>
    <property type="match status" value="1"/>
</dbReference>
<dbReference type="HAMAP" id="MF_00054_B">
    <property type="entry name" value="EF_G_EF_2_B"/>
    <property type="match status" value="1"/>
</dbReference>
<dbReference type="InterPro" id="IPR041095">
    <property type="entry name" value="EFG_II"/>
</dbReference>
<dbReference type="InterPro" id="IPR009022">
    <property type="entry name" value="EFG_III"/>
</dbReference>
<dbReference type="InterPro" id="IPR035647">
    <property type="entry name" value="EFG_III/V"/>
</dbReference>
<dbReference type="InterPro" id="IPR047872">
    <property type="entry name" value="EFG_IV"/>
</dbReference>
<dbReference type="InterPro" id="IPR035649">
    <property type="entry name" value="EFG_V"/>
</dbReference>
<dbReference type="InterPro" id="IPR000640">
    <property type="entry name" value="EFG_V-like"/>
</dbReference>
<dbReference type="InterPro" id="IPR004161">
    <property type="entry name" value="EFTu-like_2"/>
</dbReference>
<dbReference type="InterPro" id="IPR031157">
    <property type="entry name" value="G_TR_CS"/>
</dbReference>
<dbReference type="InterPro" id="IPR027417">
    <property type="entry name" value="P-loop_NTPase"/>
</dbReference>
<dbReference type="InterPro" id="IPR020568">
    <property type="entry name" value="Ribosomal_Su5_D2-typ_SF"/>
</dbReference>
<dbReference type="InterPro" id="IPR014721">
    <property type="entry name" value="Ribsml_uS5_D2-typ_fold_subgr"/>
</dbReference>
<dbReference type="InterPro" id="IPR005225">
    <property type="entry name" value="Small_GTP-bd"/>
</dbReference>
<dbReference type="InterPro" id="IPR000795">
    <property type="entry name" value="T_Tr_GTP-bd_dom"/>
</dbReference>
<dbReference type="InterPro" id="IPR009000">
    <property type="entry name" value="Transl_B-barrel_sf"/>
</dbReference>
<dbReference type="InterPro" id="IPR004540">
    <property type="entry name" value="Transl_elong_EFG/EF2"/>
</dbReference>
<dbReference type="InterPro" id="IPR005517">
    <property type="entry name" value="Transl_elong_EFG/EF2_IV"/>
</dbReference>
<dbReference type="NCBIfam" id="TIGR00484">
    <property type="entry name" value="EF-G"/>
    <property type="match status" value="1"/>
</dbReference>
<dbReference type="NCBIfam" id="NF009381">
    <property type="entry name" value="PRK12740.1-5"/>
    <property type="match status" value="1"/>
</dbReference>
<dbReference type="NCBIfam" id="TIGR00231">
    <property type="entry name" value="small_GTP"/>
    <property type="match status" value="1"/>
</dbReference>
<dbReference type="PANTHER" id="PTHR43261:SF1">
    <property type="entry name" value="RIBOSOME-RELEASING FACTOR 2, MITOCHONDRIAL"/>
    <property type="match status" value="1"/>
</dbReference>
<dbReference type="PANTHER" id="PTHR43261">
    <property type="entry name" value="TRANSLATION ELONGATION FACTOR G-RELATED"/>
    <property type="match status" value="1"/>
</dbReference>
<dbReference type="Pfam" id="PF00679">
    <property type="entry name" value="EFG_C"/>
    <property type="match status" value="1"/>
</dbReference>
<dbReference type="Pfam" id="PF14492">
    <property type="entry name" value="EFG_III"/>
    <property type="match status" value="1"/>
</dbReference>
<dbReference type="Pfam" id="PF03764">
    <property type="entry name" value="EFG_IV"/>
    <property type="match status" value="1"/>
</dbReference>
<dbReference type="Pfam" id="PF00009">
    <property type="entry name" value="GTP_EFTU"/>
    <property type="match status" value="1"/>
</dbReference>
<dbReference type="Pfam" id="PF03144">
    <property type="entry name" value="GTP_EFTU_D2"/>
    <property type="match status" value="1"/>
</dbReference>
<dbReference type="PRINTS" id="PR00315">
    <property type="entry name" value="ELONGATNFCT"/>
</dbReference>
<dbReference type="SMART" id="SM00838">
    <property type="entry name" value="EFG_C"/>
    <property type="match status" value="1"/>
</dbReference>
<dbReference type="SMART" id="SM00889">
    <property type="entry name" value="EFG_IV"/>
    <property type="match status" value="1"/>
</dbReference>
<dbReference type="SUPFAM" id="SSF54980">
    <property type="entry name" value="EF-G C-terminal domain-like"/>
    <property type="match status" value="2"/>
</dbReference>
<dbReference type="SUPFAM" id="SSF52540">
    <property type="entry name" value="P-loop containing nucleoside triphosphate hydrolases"/>
    <property type="match status" value="1"/>
</dbReference>
<dbReference type="SUPFAM" id="SSF54211">
    <property type="entry name" value="Ribosomal protein S5 domain 2-like"/>
    <property type="match status" value="1"/>
</dbReference>
<dbReference type="SUPFAM" id="SSF50447">
    <property type="entry name" value="Translation proteins"/>
    <property type="match status" value="1"/>
</dbReference>
<dbReference type="PROSITE" id="PS00301">
    <property type="entry name" value="G_TR_1"/>
    <property type="match status" value="1"/>
</dbReference>
<dbReference type="PROSITE" id="PS51722">
    <property type="entry name" value="G_TR_2"/>
    <property type="match status" value="1"/>
</dbReference>
<evidence type="ECO:0000255" key="1">
    <source>
        <dbReference type="HAMAP-Rule" id="MF_00054"/>
    </source>
</evidence>
<accession>A0Q4I1</accession>
<gene>
    <name evidence="1" type="primary">fusA</name>
    <name type="ordered locus">FTN_0237</name>
</gene>
<comment type="function">
    <text evidence="1">Catalyzes the GTP-dependent ribosomal translocation step during translation elongation. During this step, the ribosome changes from the pre-translocational (PRE) to the post-translocational (POST) state as the newly formed A-site-bound peptidyl-tRNA and P-site-bound deacylated tRNA move to the P and E sites, respectively. Catalyzes the coordinated movement of the two tRNA molecules, the mRNA and conformational changes in the ribosome.</text>
</comment>
<comment type="subcellular location">
    <subcellularLocation>
        <location evidence="1">Cytoplasm</location>
    </subcellularLocation>
</comment>
<comment type="similarity">
    <text evidence="1">Belongs to the TRAFAC class translation factor GTPase superfamily. Classic translation factor GTPase family. EF-G/EF-2 subfamily.</text>
</comment>
<protein>
    <recommendedName>
        <fullName evidence="1">Elongation factor G</fullName>
        <shortName evidence="1">EF-G</shortName>
    </recommendedName>
</protein>
<organism>
    <name type="scientific">Francisella tularensis subsp. novicida (strain U112)</name>
    <dbReference type="NCBI Taxonomy" id="401614"/>
    <lineage>
        <taxon>Bacteria</taxon>
        <taxon>Pseudomonadati</taxon>
        <taxon>Pseudomonadota</taxon>
        <taxon>Gammaproteobacteria</taxon>
        <taxon>Thiotrichales</taxon>
        <taxon>Francisellaceae</taxon>
        <taxon>Francisella</taxon>
    </lineage>
</organism>
<reference key="1">
    <citation type="journal article" date="2007" name="Genome Biol.">
        <title>Comparison of Francisella tularensis genomes reveals evolutionary events associated with the emergence of human pathogenic strains.</title>
        <authorList>
            <person name="Rohmer L."/>
            <person name="Fong C."/>
            <person name="Abmayr S."/>
            <person name="Wasnick M."/>
            <person name="Larson Freeman T.J."/>
            <person name="Radey M."/>
            <person name="Guina T."/>
            <person name="Svensson K."/>
            <person name="Hayden H.S."/>
            <person name="Jacobs M."/>
            <person name="Gallagher L.A."/>
            <person name="Manoil C."/>
            <person name="Ernst R.K."/>
            <person name="Drees B."/>
            <person name="Buckley D."/>
            <person name="Haugen E."/>
            <person name="Bovee D."/>
            <person name="Zhou Y."/>
            <person name="Chang J."/>
            <person name="Levy R."/>
            <person name="Lim R."/>
            <person name="Gillett W."/>
            <person name="Guenthener D."/>
            <person name="Kang A."/>
            <person name="Shaffer S.A."/>
            <person name="Taylor G."/>
            <person name="Chen J."/>
            <person name="Gallis B."/>
            <person name="D'Argenio D.A."/>
            <person name="Forsman M."/>
            <person name="Olson M.V."/>
            <person name="Goodlett D.R."/>
            <person name="Kaul R."/>
            <person name="Miller S.I."/>
            <person name="Brittnacher M.J."/>
        </authorList>
    </citation>
    <scope>NUCLEOTIDE SEQUENCE [LARGE SCALE GENOMIC DNA]</scope>
    <source>
        <strain>U112</strain>
    </source>
</reference>
<sequence>MPRNTALEKYRNIGICAHVDAGKTTTTERILFYTGLSHKIGEVHDGAATMDWMEQEQERGITITSAATTTFWSGMDQQFEKHRINIIDTPGHVDFTIEVERSLRVLDGAVVVFCGSSGVEPQSETVWRQANKYGVPRIVFVNKMDRSGADFERVCAQIKTRLKANVVPVQLNIGAEEDFKGVIDLIRMKAIMWNEEDMGLTYELVDIPADLQDRAEELRMEMIEAAAEASEELMEKYLEGGELSEDEIHQGLRARVLNNEIVLAFCGSAFKNKGVQAVLDGVVRYLPAPNQVPAIKCETEDGEPASRPSSDDAPFAALAFKLATDPFVGNLTFIRVYSGVLKSGDAVYNPVKGKKERVGRIVQMHANKRDEIKEVRAGDIAACIGLKDVTTGDTLCDQEDVVILEKMDFPEPVISVAVEPKSKADQEKMSIALGKLAAEDPSFRVKTDEESGQTIISGMGELHLDIIVDRMRREFKVEANVGNPQVAYRETIRSKVEQEAKFVRQSGGRGQYGHVFVRFEPLDEVDENGEAKVFKFVDEVVGGVVPKEYIGSVAKGIEEQLNNGVLAGYPMIGVKATLYDGSYHDVDSSEMAFKIAGSMALKEGAKKANACILEPIMKVEVVTPEDYLGDVMGDLNRRRGIIEGMDENPSGRVINALVPLAEMFGYATNVRSISQGRASFSMEFKKYAEVPNNIADEIIKSRNS</sequence>
<proteinExistence type="inferred from homology"/>
<feature type="chain" id="PRO_1000008826" description="Elongation factor G">
    <location>
        <begin position="1"/>
        <end position="704"/>
    </location>
</feature>
<feature type="domain" description="tr-type G">
    <location>
        <begin position="8"/>
        <end position="290"/>
    </location>
</feature>
<feature type="binding site" evidence="1">
    <location>
        <begin position="17"/>
        <end position="24"/>
    </location>
    <ligand>
        <name>GTP</name>
        <dbReference type="ChEBI" id="CHEBI:37565"/>
    </ligand>
</feature>
<feature type="binding site" evidence="1">
    <location>
        <begin position="88"/>
        <end position="92"/>
    </location>
    <ligand>
        <name>GTP</name>
        <dbReference type="ChEBI" id="CHEBI:37565"/>
    </ligand>
</feature>
<feature type="binding site" evidence="1">
    <location>
        <begin position="142"/>
        <end position="145"/>
    </location>
    <ligand>
        <name>GTP</name>
        <dbReference type="ChEBI" id="CHEBI:37565"/>
    </ligand>
</feature>
<name>EFG_FRATN</name>
<keyword id="KW-0963">Cytoplasm</keyword>
<keyword id="KW-0251">Elongation factor</keyword>
<keyword id="KW-0342">GTP-binding</keyword>
<keyword id="KW-0547">Nucleotide-binding</keyword>
<keyword id="KW-0648">Protein biosynthesis</keyword>